<accession>Q5RA95</accession>
<sequence length="375" mass="41425">MDELQDVQLTEIKPLLNDKNGTRNFQDFDCQEHDIETTHGMVHVTIRGLPKGNRPVILTYHDIGLNHKSCFNAFFNFEDMQEITQHFAVCHVDAPGQQEGAPSFPTGYQYPTMDELAEMLPPVLTHLSLKSIIGIGVGAGAYILSRFALNHPELVEGLVLINVDPCAKGWIDWAASKLSGLTTNVVDIILAHHFGQEELQANPDLIQTYRMHIAQDINQDNLQLFLNSYNGRRDLEIERPILGQNDNKSKTLKCSTLLVVGDNSPAVEAVVECNSRLNPINTTLLKMADCGGLPQVVQPGKLTEAFKYFLQGMGYIPSASMTRLARSRTHSTSSSLGSGESPFSRSVTSNQSDGTQESCESPDVLDRHQTMEVSC</sequence>
<feature type="chain" id="PRO_0000357053" description="Protein NDRG3">
    <location>
        <begin position="1"/>
        <end position="375"/>
    </location>
</feature>
<feature type="region of interest" description="Disordered" evidence="3">
    <location>
        <begin position="326"/>
        <end position="375"/>
    </location>
</feature>
<feature type="compositionally biased region" description="Low complexity" evidence="3">
    <location>
        <begin position="330"/>
        <end position="346"/>
    </location>
</feature>
<feature type="compositionally biased region" description="Polar residues" evidence="3">
    <location>
        <begin position="347"/>
        <end position="359"/>
    </location>
</feature>
<feature type="compositionally biased region" description="Basic and acidic residues" evidence="3">
    <location>
        <begin position="364"/>
        <end position="375"/>
    </location>
</feature>
<feature type="modified residue" description="N-acetylmethionine" evidence="2">
    <location>
        <position position="1"/>
    </location>
</feature>
<feature type="modified residue" description="Phosphothreonine" evidence="2">
    <location>
        <position position="322"/>
    </location>
</feature>
<feature type="modified residue" description="Phosphothreonine" evidence="2">
    <location>
        <position position="329"/>
    </location>
</feature>
<feature type="modified residue" description="Phosphoserine" evidence="2">
    <location>
        <position position="331"/>
    </location>
</feature>
<feature type="modified residue" description="Phosphothreonine" evidence="2">
    <location>
        <position position="332"/>
    </location>
</feature>
<feature type="modified residue" description="Phosphoserine" evidence="2">
    <location>
        <position position="334"/>
    </location>
</feature>
<feature type="modified residue" description="Phosphoserine" evidence="2">
    <location>
        <position position="335"/>
    </location>
</feature>
<feature type="modified residue" description="Phosphoserine" evidence="2">
    <location>
        <position position="338"/>
    </location>
</feature>
<feature type="modified residue" description="Phosphoserine" evidence="2">
    <location>
        <position position="341"/>
    </location>
</feature>
<feature type="modified residue" description="Phosphoserine" evidence="2">
    <location>
        <position position="352"/>
    </location>
</feature>
<feature type="modified residue" description="Phosphothreonine" evidence="2">
    <location>
        <position position="355"/>
    </location>
</feature>
<feature type="modified residue" description="Phosphoserine" evidence="1">
    <location>
        <position position="361"/>
    </location>
</feature>
<feature type="modified residue" description="Phosphoserine" evidence="2">
    <location>
        <position position="374"/>
    </location>
</feature>
<protein>
    <recommendedName>
        <fullName>Protein NDRG3</fullName>
    </recommendedName>
    <alternativeName>
        <fullName>N-myc downstream-regulated gene 3 protein</fullName>
    </alternativeName>
</protein>
<comment type="similarity">
    <text evidence="4">Belongs to the NDRG family.</text>
</comment>
<gene>
    <name type="primary">NDRG3</name>
</gene>
<reference key="1">
    <citation type="submission" date="2004-11" db="EMBL/GenBank/DDBJ databases">
        <authorList>
            <consortium name="The German cDNA consortium"/>
        </authorList>
    </citation>
    <scope>NUCLEOTIDE SEQUENCE [LARGE SCALE MRNA]</scope>
    <source>
        <tissue>Brain cortex</tissue>
    </source>
</reference>
<evidence type="ECO:0000250" key="1">
    <source>
        <dbReference type="UniProtKB" id="Q9QYF9"/>
    </source>
</evidence>
<evidence type="ECO:0000250" key="2">
    <source>
        <dbReference type="UniProtKB" id="Q9UGV2"/>
    </source>
</evidence>
<evidence type="ECO:0000256" key="3">
    <source>
        <dbReference type="SAM" id="MobiDB-lite"/>
    </source>
</evidence>
<evidence type="ECO:0000305" key="4"/>
<name>NDRG3_PONAB</name>
<proteinExistence type="evidence at transcript level"/>
<keyword id="KW-0007">Acetylation</keyword>
<keyword id="KW-0597">Phosphoprotein</keyword>
<keyword id="KW-1185">Reference proteome</keyword>
<organism>
    <name type="scientific">Pongo abelii</name>
    <name type="common">Sumatran orangutan</name>
    <name type="synonym">Pongo pygmaeus abelii</name>
    <dbReference type="NCBI Taxonomy" id="9601"/>
    <lineage>
        <taxon>Eukaryota</taxon>
        <taxon>Metazoa</taxon>
        <taxon>Chordata</taxon>
        <taxon>Craniata</taxon>
        <taxon>Vertebrata</taxon>
        <taxon>Euteleostomi</taxon>
        <taxon>Mammalia</taxon>
        <taxon>Eutheria</taxon>
        <taxon>Euarchontoglires</taxon>
        <taxon>Primates</taxon>
        <taxon>Haplorrhini</taxon>
        <taxon>Catarrhini</taxon>
        <taxon>Hominidae</taxon>
        <taxon>Pongo</taxon>
    </lineage>
</organism>
<dbReference type="EMBL" id="CR859123">
    <property type="protein sequence ID" value="CAH91315.1"/>
    <property type="molecule type" value="mRNA"/>
</dbReference>
<dbReference type="RefSeq" id="NP_001125778.1">
    <property type="nucleotide sequence ID" value="NM_001132306.2"/>
</dbReference>
<dbReference type="SMR" id="Q5RA95"/>
<dbReference type="FunCoup" id="Q5RA95">
    <property type="interactions" value="1127"/>
</dbReference>
<dbReference type="STRING" id="9601.ENSPPYP00000012256"/>
<dbReference type="ESTHER" id="ponpy-q5ra95">
    <property type="family name" value="Ndr_family"/>
</dbReference>
<dbReference type="MEROPS" id="S33.987"/>
<dbReference type="Ensembl" id="ENSPPYT00000012737.3">
    <property type="protein sequence ID" value="ENSPPYP00000012256.2"/>
    <property type="gene ID" value="ENSPPYG00000010974.3"/>
</dbReference>
<dbReference type="GeneID" id="100172705"/>
<dbReference type="KEGG" id="pon:100172705"/>
<dbReference type="CTD" id="57446"/>
<dbReference type="eggNOG" id="KOG2931">
    <property type="taxonomic scope" value="Eukaryota"/>
</dbReference>
<dbReference type="GeneTree" id="ENSGT00950000182872"/>
<dbReference type="HOGENOM" id="CLU_035361_1_0_1"/>
<dbReference type="InParanoid" id="Q5RA95"/>
<dbReference type="OrthoDB" id="741027at2759"/>
<dbReference type="TreeFam" id="TF313168"/>
<dbReference type="Proteomes" id="UP000001595">
    <property type="component" value="Chromosome 20"/>
</dbReference>
<dbReference type="FunFam" id="3.40.50.1820:FF:000006">
    <property type="entry name" value="NDRG family member 3"/>
    <property type="match status" value="1"/>
</dbReference>
<dbReference type="Gene3D" id="3.40.50.1820">
    <property type="entry name" value="alpha/beta hydrolase"/>
    <property type="match status" value="1"/>
</dbReference>
<dbReference type="InterPro" id="IPR029058">
    <property type="entry name" value="AB_hydrolase_fold"/>
</dbReference>
<dbReference type="InterPro" id="IPR004142">
    <property type="entry name" value="NDRG"/>
</dbReference>
<dbReference type="PANTHER" id="PTHR11034">
    <property type="entry name" value="N-MYC DOWNSTREAM REGULATED"/>
    <property type="match status" value="1"/>
</dbReference>
<dbReference type="Pfam" id="PF03096">
    <property type="entry name" value="Ndr"/>
    <property type="match status" value="1"/>
</dbReference>
<dbReference type="SUPFAM" id="SSF53474">
    <property type="entry name" value="alpha/beta-Hydrolases"/>
    <property type="match status" value="1"/>
</dbReference>